<organism>
    <name type="scientific">Nostoc sp. (strain PCC 7120 / SAG 25.82 / UTEX 2576)</name>
    <dbReference type="NCBI Taxonomy" id="103690"/>
    <lineage>
        <taxon>Bacteria</taxon>
        <taxon>Bacillati</taxon>
        <taxon>Cyanobacteriota</taxon>
        <taxon>Cyanophyceae</taxon>
        <taxon>Nostocales</taxon>
        <taxon>Nostocaceae</taxon>
        <taxon>Nostoc</taxon>
    </lineage>
</organism>
<comment type="function">
    <text evidence="1">Involved in the biosynthesis of the central metabolite phospho-alpha-D-ribosyl-1-pyrophosphate (PRPP) via the transfer of pyrophosphoryl group from ATP to 1-hydroxyl of ribose-5-phosphate (Rib-5-P).</text>
</comment>
<comment type="catalytic activity">
    <reaction evidence="1">
        <text>D-ribose 5-phosphate + ATP = 5-phospho-alpha-D-ribose 1-diphosphate + AMP + H(+)</text>
        <dbReference type="Rhea" id="RHEA:15609"/>
        <dbReference type="ChEBI" id="CHEBI:15378"/>
        <dbReference type="ChEBI" id="CHEBI:30616"/>
        <dbReference type="ChEBI" id="CHEBI:58017"/>
        <dbReference type="ChEBI" id="CHEBI:78346"/>
        <dbReference type="ChEBI" id="CHEBI:456215"/>
        <dbReference type="EC" id="2.7.6.1"/>
    </reaction>
</comment>
<comment type="cofactor">
    <cofactor evidence="1">
        <name>Mg(2+)</name>
        <dbReference type="ChEBI" id="CHEBI:18420"/>
    </cofactor>
    <text evidence="1">Binds 2 Mg(2+) ions per subunit.</text>
</comment>
<comment type="pathway">
    <text evidence="1">Metabolic intermediate biosynthesis; 5-phospho-alpha-D-ribose 1-diphosphate biosynthesis; 5-phospho-alpha-D-ribose 1-diphosphate from D-ribose 5-phosphate (route I): step 1/1.</text>
</comment>
<comment type="subunit">
    <text evidence="1">Homohexamer.</text>
</comment>
<comment type="subcellular location">
    <subcellularLocation>
        <location evidence="1">Cytoplasm</location>
    </subcellularLocation>
</comment>
<comment type="similarity">
    <text evidence="1">Belongs to the ribose-phosphate pyrophosphokinase family. Class I subfamily.</text>
</comment>
<gene>
    <name evidence="1" type="primary">prs</name>
    <name type="ordered locus">alr4670</name>
</gene>
<sequence length="330" mass="36148">MLSSATFKLQPTATGLTENHRLRLFSGSSNVQLSQEVARYLGMDLGPMIRKRFADGELYVQIQESIRGCDVYLIQPCCQPVNDHLMELLIMVDACRRASARQVTAVIPYYGYARADRKTAGRESITAKLVANLITQAGANRVLAMDLHAAQIQGYFDIPFDHVYGSPVLLDYLTSKQLHDIVVVSPDVGGVARARAFAKKLNDAPLAIIDKRRQAHNVAEVLNVIGDVKGKTAVLVDDMIDTGGTIAAGAKLLREEGARQVYACATHAVFSPPAVERLSSGLFEEVIVTNTIPIPESDRFPQLVVLSVANLLGETIWRIHEDTSISSMFR</sequence>
<accession>Q8YN97</accession>
<proteinExistence type="inferred from homology"/>
<name>KPRS_NOSS1</name>
<dbReference type="EC" id="2.7.6.1" evidence="1"/>
<dbReference type="EMBL" id="BA000019">
    <property type="protein sequence ID" value="BAB76369.1"/>
    <property type="molecule type" value="Genomic_DNA"/>
</dbReference>
<dbReference type="PIR" id="AF2389">
    <property type="entry name" value="AF2389"/>
</dbReference>
<dbReference type="SMR" id="Q8YN97"/>
<dbReference type="STRING" id="103690.gene:10496722"/>
<dbReference type="KEGG" id="ana:alr4670"/>
<dbReference type="eggNOG" id="COG0462">
    <property type="taxonomic scope" value="Bacteria"/>
</dbReference>
<dbReference type="UniPathway" id="UPA00087">
    <property type="reaction ID" value="UER00172"/>
</dbReference>
<dbReference type="Proteomes" id="UP000002483">
    <property type="component" value="Chromosome"/>
</dbReference>
<dbReference type="GO" id="GO:0005737">
    <property type="term" value="C:cytoplasm"/>
    <property type="evidence" value="ECO:0007669"/>
    <property type="project" value="UniProtKB-SubCell"/>
</dbReference>
<dbReference type="GO" id="GO:0002189">
    <property type="term" value="C:ribose phosphate diphosphokinase complex"/>
    <property type="evidence" value="ECO:0007669"/>
    <property type="project" value="TreeGrafter"/>
</dbReference>
<dbReference type="GO" id="GO:0005524">
    <property type="term" value="F:ATP binding"/>
    <property type="evidence" value="ECO:0007669"/>
    <property type="project" value="UniProtKB-KW"/>
</dbReference>
<dbReference type="GO" id="GO:0016301">
    <property type="term" value="F:kinase activity"/>
    <property type="evidence" value="ECO:0007669"/>
    <property type="project" value="UniProtKB-KW"/>
</dbReference>
<dbReference type="GO" id="GO:0000287">
    <property type="term" value="F:magnesium ion binding"/>
    <property type="evidence" value="ECO:0007669"/>
    <property type="project" value="UniProtKB-UniRule"/>
</dbReference>
<dbReference type="GO" id="GO:0004749">
    <property type="term" value="F:ribose phosphate diphosphokinase activity"/>
    <property type="evidence" value="ECO:0007669"/>
    <property type="project" value="UniProtKB-UniRule"/>
</dbReference>
<dbReference type="GO" id="GO:0006015">
    <property type="term" value="P:5-phosphoribose 1-diphosphate biosynthetic process"/>
    <property type="evidence" value="ECO:0007669"/>
    <property type="project" value="UniProtKB-UniRule"/>
</dbReference>
<dbReference type="GO" id="GO:0006164">
    <property type="term" value="P:purine nucleotide biosynthetic process"/>
    <property type="evidence" value="ECO:0007669"/>
    <property type="project" value="TreeGrafter"/>
</dbReference>
<dbReference type="GO" id="GO:0009156">
    <property type="term" value="P:ribonucleoside monophosphate biosynthetic process"/>
    <property type="evidence" value="ECO:0007669"/>
    <property type="project" value="InterPro"/>
</dbReference>
<dbReference type="CDD" id="cd06223">
    <property type="entry name" value="PRTases_typeI"/>
    <property type="match status" value="1"/>
</dbReference>
<dbReference type="FunFam" id="3.40.50.2020:FF:000002">
    <property type="entry name" value="Ribose-phosphate pyrophosphokinase"/>
    <property type="match status" value="1"/>
</dbReference>
<dbReference type="FunFam" id="3.40.50.2020:FF:000014">
    <property type="entry name" value="Ribose-phosphate pyrophosphokinase 1"/>
    <property type="match status" value="1"/>
</dbReference>
<dbReference type="Gene3D" id="3.40.50.2020">
    <property type="match status" value="2"/>
</dbReference>
<dbReference type="HAMAP" id="MF_00583_B">
    <property type="entry name" value="RibP_PPkinase_B"/>
    <property type="match status" value="1"/>
</dbReference>
<dbReference type="InterPro" id="IPR000842">
    <property type="entry name" value="PRib_PP_synth_CS"/>
</dbReference>
<dbReference type="InterPro" id="IPR029099">
    <property type="entry name" value="Pribosyltran_N"/>
</dbReference>
<dbReference type="InterPro" id="IPR000836">
    <property type="entry name" value="PRibTrfase_dom"/>
</dbReference>
<dbReference type="InterPro" id="IPR029057">
    <property type="entry name" value="PRTase-like"/>
</dbReference>
<dbReference type="InterPro" id="IPR005946">
    <property type="entry name" value="Rib-P_diPkinase"/>
</dbReference>
<dbReference type="InterPro" id="IPR037515">
    <property type="entry name" value="Rib-P_diPkinase_bac"/>
</dbReference>
<dbReference type="NCBIfam" id="NF002320">
    <property type="entry name" value="PRK01259.1"/>
    <property type="match status" value="1"/>
</dbReference>
<dbReference type="NCBIfam" id="NF002758">
    <property type="entry name" value="PRK02812.1"/>
    <property type="match status" value="1"/>
</dbReference>
<dbReference type="NCBIfam" id="TIGR01251">
    <property type="entry name" value="ribP_PPkin"/>
    <property type="match status" value="1"/>
</dbReference>
<dbReference type="PANTHER" id="PTHR10210">
    <property type="entry name" value="RIBOSE-PHOSPHATE DIPHOSPHOKINASE FAMILY MEMBER"/>
    <property type="match status" value="1"/>
</dbReference>
<dbReference type="PANTHER" id="PTHR10210:SF41">
    <property type="entry name" value="RIBOSE-PHOSPHATE PYROPHOSPHOKINASE 1, CHLOROPLASTIC"/>
    <property type="match status" value="1"/>
</dbReference>
<dbReference type="Pfam" id="PF14572">
    <property type="entry name" value="Pribosyl_synth"/>
    <property type="match status" value="1"/>
</dbReference>
<dbReference type="Pfam" id="PF13793">
    <property type="entry name" value="Pribosyltran_N"/>
    <property type="match status" value="1"/>
</dbReference>
<dbReference type="SMART" id="SM01400">
    <property type="entry name" value="Pribosyltran_N"/>
    <property type="match status" value="1"/>
</dbReference>
<dbReference type="SUPFAM" id="SSF53271">
    <property type="entry name" value="PRTase-like"/>
    <property type="match status" value="1"/>
</dbReference>
<dbReference type="PROSITE" id="PS00114">
    <property type="entry name" value="PRPP_SYNTHASE"/>
    <property type="match status" value="1"/>
</dbReference>
<protein>
    <recommendedName>
        <fullName evidence="1">Ribose-phosphate pyrophosphokinase</fullName>
        <shortName evidence="1">RPPK</shortName>
        <ecNumber evidence="1">2.7.6.1</ecNumber>
    </recommendedName>
    <alternativeName>
        <fullName evidence="1">5-phospho-D-ribosyl alpha-1-diphosphate synthase</fullName>
    </alternativeName>
    <alternativeName>
        <fullName evidence="1">Phosphoribosyl diphosphate synthase</fullName>
    </alternativeName>
    <alternativeName>
        <fullName evidence="1">Phosphoribosyl pyrophosphate synthase</fullName>
        <shortName evidence="1">P-Rib-PP synthase</shortName>
        <shortName evidence="1">PRPP synthase</shortName>
        <shortName evidence="1">PRPPase</shortName>
    </alternativeName>
</protein>
<feature type="chain" id="PRO_0000141104" description="Ribose-phosphate pyrophosphokinase">
    <location>
        <begin position="1"/>
        <end position="330"/>
    </location>
</feature>
<feature type="active site" evidence="1">
    <location>
        <position position="211"/>
    </location>
</feature>
<feature type="binding site" evidence="1">
    <location>
        <begin position="55"/>
        <end position="57"/>
    </location>
    <ligand>
        <name>ATP</name>
        <dbReference type="ChEBI" id="CHEBI:30616"/>
    </ligand>
</feature>
<feature type="binding site" evidence="1">
    <location>
        <position position="148"/>
    </location>
    <ligand>
        <name>Mg(2+)</name>
        <dbReference type="ChEBI" id="CHEBI:18420"/>
        <label>1</label>
    </ligand>
</feature>
<feature type="binding site" evidence="1">
    <location>
        <position position="187"/>
    </location>
    <ligand>
        <name>Mg(2+)</name>
        <dbReference type="ChEBI" id="CHEBI:18420"/>
        <label>2</label>
    </ligand>
</feature>
<feature type="binding site" evidence="1">
    <location>
        <position position="213"/>
    </location>
    <ligand>
        <name>D-ribose 5-phosphate</name>
        <dbReference type="ChEBI" id="CHEBI:78346"/>
    </ligand>
</feature>
<feature type="binding site" evidence="1">
    <location>
        <position position="237"/>
    </location>
    <ligand>
        <name>D-ribose 5-phosphate</name>
        <dbReference type="ChEBI" id="CHEBI:78346"/>
    </ligand>
</feature>
<feature type="binding site" evidence="1">
    <location>
        <begin position="241"/>
        <end position="245"/>
    </location>
    <ligand>
        <name>D-ribose 5-phosphate</name>
        <dbReference type="ChEBI" id="CHEBI:78346"/>
    </ligand>
</feature>
<evidence type="ECO:0000255" key="1">
    <source>
        <dbReference type="HAMAP-Rule" id="MF_00583"/>
    </source>
</evidence>
<reference key="1">
    <citation type="journal article" date="2001" name="DNA Res.">
        <title>Complete genomic sequence of the filamentous nitrogen-fixing cyanobacterium Anabaena sp. strain PCC 7120.</title>
        <authorList>
            <person name="Kaneko T."/>
            <person name="Nakamura Y."/>
            <person name="Wolk C.P."/>
            <person name="Kuritz T."/>
            <person name="Sasamoto S."/>
            <person name="Watanabe A."/>
            <person name="Iriguchi M."/>
            <person name="Ishikawa A."/>
            <person name="Kawashima K."/>
            <person name="Kimura T."/>
            <person name="Kishida Y."/>
            <person name="Kohara M."/>
            <person name="Matsumoto M."/>
            <person name="Matsuno A."/>
            <person name="Muraki A."/>
            <person name="Nakazaki N."/>
            <person name="Shimpo S."/>
            <person name="Sugimoto M."/>
            <person name="Takazawa M."/>
            <person name="Yamada M."/>
            <person name="Yasuda M."/>
            <person name="Tabata S."/>
        </authorList>
    </citation>
    <scope>NUCLEOTIDE SEQUENCE [LARGE SCALE GENOMIC DNA]</scope>
    <source>
        <strain>PCC 7120 / SAG 25.82 / UTEX 2576</strain>
    </source>
</reference>
<keyword id="KW-0067">ATP-binding</keyword>
<keyword id="KW-0963">Cytoplasm</keyword>
<keyword id="KW-0418">Kinase</keyword>
<keyword id="KW-0460">Magnesium</keyword>
<keyword id="KW-0479">Metal-binding</keyword>
<keyword id="KW-0545">Nucleotide biosynthesis</keyword>
<keyword id="KW-0547">Nucleotide-binding</keyword>
<keyword id="KW-1185">Reference proteome</keyword>
<keyword id="KW-0808">Transferase</keyword>